<reference key="1">
    <citation type="journal article" date="2001" name="J. Bacteriol.">
        <title>Genome sequence and comparative analysis of the solvent-producing bacterium Clostridium acetobutylicum.</title>
        <authorList>
            <person name="Noelling J."/>
            <person name="Breton G."/>
            <person name="Omelchenko M.V."/>
            <person name="Makarova K.S."/>
            <person name="Zeng Q."/>
            <person name="Gibson R."/>
            <person name="Lee H.M."/>
            <person name="Dubois J."/>
            <person name="Qiu D."/>
            <person name="Hitti J."/>
            <person name="Wolf Y.I."/>
            <person name="Tatusov R.L."/>
            <person name="Sabathe F."/>
            <person name="Doucette-Stamm L.A."/>
            <person name="Soucaille P."/>
            <person name="Daly M.J."/>
            <person name="Bennett G.N."/>
            <person name="Koonin E.V."/>
            <person name="Smith D.R."/>
        </authorList>
    </citation>
    <scope>NUCLEOTIDE SEQUENCE [LARGE SCALE GENOMIC DNA]</scope>
    <source>
        <strain>ATCC 824 / DSM 792 / JCM 1419 / IAM 19013 / LMG 5710 / NBRC 13948 / NRRL B-527 / VKM B-1787 / 2291 / W</strain>
    </source>
</reference>
<evidence type="ECO:0000255" key="1">
    <source>
        <dbReference type="HAMAP-Rule" id="MF_00253"/>
    </source>
</evidence>
<dbReference type="EC" id="6.1.1.14" evidence="1"/>
<dbReference type="EMBL" id="AE001437">
    <property type="protein sequence ID" value="AAK81132.1"/>
    <property type="molecule type" value="Genomic_DNA"/>
</dbReference>
<dbReference type="PIR" id="A97293">
    <property type="entry name" value="A97293"/>
</dbReference>
<dbReference type="RefSeq" id="NP_349792.1">
    <property type="nucleotide sequence ID" value="NC_003030.1"/>
</dbReference>
<dbReference type="RefSeq" id="WP_010966472.1">
    <property type="nucleotide sequence ID" value="NC_003030.1"/>
</dbReference>
<dbReference type="SMR" id="Q97EB8"/>
<dbReference type="STRING" id="272562.CA_C3195"/>
<dbReference type="KEGG" id="cac:CA_C3195"/>
<dbReference type="PATRIC" id="fig|272562.8.peg.3375"/>
<dbReference type="eggNOG" id="COG0423">
    <property type="taxonomic scope" value="Bacteria"/>
</dbReference>
<dbReference type="HOGENOM" id="CLU_015515_2_1_9"/>
<dbReference type="OrthoDB" id="9760853at2"/>
<dbReference type="Proteomes" id="UP000000814">
    <property type="component" value="Chromosome"/>
</dbReference>
<dbReference type="GO" id="GO:0005737">
    <property type="term" value="C:cytoplasm"/>
    <property type="evidence" value="ECO:0007669"/>
    <property type="project" value="UniProtKB-SubCell"/>
</dbReference>
<dbReference type="GO" id="GO:0005524">
    <property type="term" value="F:ATP binding"/>
    <property type="evidence" value="ECO:0007669"/>
    <property type="project" value="UniProtKB-UniRule"/>
</dbReference>
<dbReference type="GO" id="GO:0140096">
    <property type="term" value="F:catalytic activity, acting on a protein"/>
    <property type="evidence" value="ECO:0007669"/>
    <property type="project" value="UniProtKB-ARBA"/>
</dbReference>
<dbReference type="GO" id="GO:0004820">
    <property type="term" value="F:glycine-tRNA ligase activity"/>
    <property type="evidence" value="ECO:0000250"/>
    <property type="project" value="UniProtKB"/>
</dbReference>
<dbReference type="GO" id="GO:0046983">
    <property type="term" value="F:protein dimerization activity"/>
    <property type="evidence" value="ECO:0000250"/>
    <property type="project" value="UniProtKB"/>
</dbReference>
<dbReference type="GO" id="GO:0016740">
    <property type="term" value="F:transferase activity"/>
    <property type="evidence" value="ECO:0007669"/>
    <property type="project" value="UniProtKB-ARBA"/>
</dbReference>
<dbReference type="GO" id="GO:0006426">
    <property type="term" value="P:glycyl-tRNA aminoacylation"/>
    <property type="evidence" value="ECO:0007669"/>
    <property type="project" value="UniProtKB-UniRule"/>
</dbReference>
<dbReference type="CDD" id="cd00774">
    <property type="entry name" value="GlyRS-like_core"/>
    <property type="match status" value="1"/>
</dbReference>
<dbReference type="CDD" id="cd00858">
    <property type="entry name" value="GlyRS_anticodon"/>
    <property type="match status" value="1"/>
</dbReference>
<dbReference type="FunFam" id="3.40.50.800:FF:000002">
    <property type="entry name" value="Glycine--tRNA ligase"/>
    <property type="match status" value="1"/>
</dbReference>
<dbReference type="Gene3D" id="3.40.50.800">
    <property type="entry name" value="Anticodon-binding domain"/>
    <property type="match status" value="1"/>
</dbReference>
<dbReference type="Gene3D" id="3.30.930.10">
    <property type="entry name" value="Bira Bifunctional Protein, Domain 2"/>
    <property type="match status" value="1"/>
</dbReference>
<dbReference type="HAMAP" id="MF_00253_B">
    <property type="entry name" value="Gly_tRNA_synth_B"/>
    <property type="match status" value="1"/>
</dbReference>
<dbReference type="InterPro" id="IPR002314">
    <property type="entry name" value="aa-tRNA-synt_IIb"/>
</dbReference>
<dbReference type="InterPro" id="IPR006195">
    <property type="entry name" value="aa-tRNA-synth_II"/>
</dbReference>
<dbReference type="InterPro" id="IPR045864">
    <property type="entry name" value="aa-tRNA-synth_II/BPL/LPL"/>
</dbReference>
<dbReference type="InterPro" id="IPR004154">
    <property type="entry name" value="Anticodon-bd"/>
</dbReference>
<dbReference type="InterPro" id="IPR036621">
    <property type="entry name" value="Anticodon-bd_dom_sf"/>
</dbReference>
<dbReference type="InterPro" id="IPR027031">
    <property type="entry name" value="Gly-tRNA_synthase/POLG2"/>
</dbReference>
<dbReference type="InterPro" id="IPR022961">
    <property type="entry name" value="Gly_tRNA_ligase_bac"/>
</dbReference>
<dbReference type="InterPro" id="IPR033731">
    <property type="entry name" value="GlyRS-like_core"/>
</dbReference>
<dbReference type="InterPro" id="IPR002315">
    <property type="entry name" value="tRNA-synt_gly"/>
</dbReference>
<dbReference type="NCBIfam" id="TIGR00389">
    <property type="entry name" value="glyS_dimeric"/>
    <property type="match status" value="1"/>
</dbReference>
<dbReference type="NCBIfam" id="NF003211">
    <property type="entry name" value="PRK04173.1"/>
    <property type="match status" value="1"/>
</dbReference>
<dbReference type="PANTHER" id="PTHR10745:SF8">
    <property type="entry name" value="DNA POLYMERASE SUBUNIT GAMMA-2, MITOCHONDRIAL"/>
    <property type="match status" value="1"/>
</dbReference>
<dbReference type="PANTHER" id="PTHR10745">
    <property type="entry name" value="GLYCYL-TRNA SYNTHETASE/DNA POLYMERASE SUBUNIT GAMMA-2"/>
    <property type="match status" value="1"/>
</dbReference>
<dbReference type="Pfam" id="PF03129">
    <property type="entry name" value="HGTP_anticodon"/>
    <property type="match status" value="1"/>
</dbReference>
<dbReference type="Pfam" id="PF00587">
    <property type="entry name" value="tRNA-synt_2b"/>
    <property type="match status" value="1"/>
</dbReference>
<dbReference type="PRINTS" id="PR01043">
    <property type="entry name" value="TRNASYNTHGLY"/>
</dbReference>
<dbReference type="SUPFAM" id="SSF52954">
    <property type="entry name" value="Class II aaRS ABD-related"/>
    <property type="match status" value="1"/>
</dbReference>
<dbReference type="SUPFAM" id="SSF55681">
    <property type="entry name" value="Class II aaRS and biotin synthetases"/>
    <property type="match status" value="1"/>
</dbReference>
<dbReference type="PROSITE" id="PS50862">
    <property type="entry name" value="AA_TRNA_LIGASE_II"/>
    <property type="match status" value="1"/>
</dbReference>
<proteinExistence type="inferred from homology"/>
<keyword id="KW-0030">Aminoacyl-tRNA synthetase</keyword>
<keyword id="KW-0067">ATP-binding</keyword>
<keyword id="KW-0963">Cytoplasm</keyword>
<keyword id="KW-0436">Ligase</keyword>
<keyword id="KW-0547">Nucleotide-binding</keyword>
<keyword id="KW-0648">Protein biosynthesis</keyword>
<keyword id="KW-1185">Reference proteome</keyword>
<protein>
    <recommendedName>
        <fullName evidence="1">Glycine--tRNA ligase</fullName>
        <ecNumber evidence="1">6.1.1.14</ecNumber>
    </recommendedName>
    <alternativeName>
        <fullName evidence="1">Glycyl-tRNA synthetase</fullName>
        <shortName evidence="1">GlyRS</shortName>
    </alternativeName>
</protein>
<organism>
    <name type="scientific">Clostridium acetobutylicum (strain ATCC 824 / DSM 792 / JCM 1419 / IAM 19013 / LMG 5710 / NBRC 13948 / NRRL B-527 / VKM B-1787 / 2291 / W)</name>
    <dbReference type="NCBI Taxonomy" id="272562"/>
    <lineage>
        <taxon>Bacteria</taxon>
        <taxon>Bacillati</taxon>
        <taxon>Bacillota</taxon>
        <taxon>Clostridia</taxon>
        <taxon>Eubacteriales</taxon>
        <taxon>Clostridiaceae</taxon>
        <taxon>Clostridium</taxon>
    </lineage>
</organism>
<name>SYG_CLOAB</name>
<sequence>MKDEKTMDKIVSLAKNRGFVFAGSEIYGGLANSWDYGPLGVELKNNVKKLWWKKFVQDNTYNVGLDCAILMNSEVWVASGHLGGFSDPLMDCKECKSRFRADKIVEDYLTEQGAEVASADGWSNEKLENFIKDKHIKCPKCGKENFTSIRKFNLMFKTFQGVTEDASSEIYLRPETAQGIFVNFKNVQRSSRKKVPFGIGQIGKAFRNEITPGNFTFRTREFEQMELEFFCKPGTDLEWFKYWKDYCWSFLLDLGINKENLRFRDHSAEELVFYSKATSDIEYKFPFGWGELWGVADRTDYDLKKHMDHSGEDMNYLDPSTNEKYVPYVIEPSLGADRVALAFLIDAYDEEELEGGDQRIVLHFHPQIAPIKAAVLPLSKKLSEKALDVYSKISSKFNIEYDETGSIGKRYRRQDEIGTPYCITVDFDTLEDEAVTIRDRDSMSQVRVKIEELEKYLEEKIK</sequence>
<gene>
    <name evidence="1" type="primary">glyQS</name>
    <name type="ordered locus">CA_C3195</name>
</gene>
<accession>Q97EB8</accession>
<feature type="chain" id="PRO_0000072952" description="Glycine--tRNA ligase">
    <location>
        <begin position="1"/>
        <end position="462"/>
    </location>
</feature>
<feature type="binding site" evidence="1">
    <location>
        <position position="100"/>
    </location>
    <ligand>
        <name>substrate</name>
    </ligand>
</feature>
<feature type="binding site" evidence="1">
    <location>
        <position position="175"/>
    </location>
    <ligand>
        <name>substrate</name>
    </ligand>
</feature>
<feature type="binding site" evidence="1">
    <location>
        <begin position="207"/>
        <end position="209"/>
    </location>
    <ligand>
        <name>ATP</name>
        <dbReference type="ChEBI" id="CHEBI:30616"/>
    </ligand>
</feature>
<feature type="binding site" evidence="1">
    <location>
        <begin position="217"/>
        <end position="222"/>
    </location>
    <ligand>
        <name>ATP</name>
        <dbReference type="ChEBI" id="CHEBI:30616"/>
    </ligand>
</feature>
<feature type="binding site" evidence="1">
    <location>
        <begin position="222"/>
        <end position="226"/>
    </location>
    <ligand>
        <name>substrate</name>
    </ligand>
</feature>
<feature type="binding site" evidence="1">
    <location>
        <begin position="291"/>
        <end position="292"/>
    </location>
    <ligand>
        <name>ATP</name>
        <dbReference type="ChEBI" id="CHEBI:30616"/>
    </ligand>
</feature>
<feature type="binding site" evidence="1">
    <location>
        <begin position="331"/>
        <end position="335"/>
    </location>
    <ligand>
        <name>substrate</name>
    </ligand>
</feature>
<feature type="binding site" evidence="1">
    <location>
        <begin position="335"/>
        <end position="338"/>
    </location>
    <ligand>
        <name>ATP</name>
        <dbReference type="ChEBI" id="CHEBI:30616"/>
    </ligand>
</feature>
<comment type="function">
    <text evidence="1">Catalyzes the attachment of glycine to tRNA(Gly).</text>
</comment>
<comment type="catalytic activity">
    <reaction evidence="1">
        <text>tRNA(Gly) + glycine + ATP = glycyl-tRNA(Gly) + AMP + diphosphate</text>
        <dbReference type="Rhea" id="RHEA:16013"/>
        <dbReference type="Rhea" id="RHEA-COMP:9664"/>
        <dbReference type="Rhea" id="RHEA-COMP:9683"/>
        <dbReference type="ChEBI" id="CHEBI:30616"/>
        <dbReference type="ChEBI" id="CHEBI:33019"/>
        <dbReference type="ChEBI" id="CHEBI:57305"/>
        <dbReference type="ChEBI" id="CHEBI:78442"/>
        <dbReference type="ChEBI" id="CHEBI:78522"/>
        <dbReference type="ChEBI" id="CHEBI:456215"/>
        <dbReference type="EC" id="6.1.1.14"/>
    </reaction>
</comment>
<comment type="subunit">
    <text evidence="1">Homodimer.</text>
</comment>
<comment type="subcellular location">
    <subcellularLocation>
        <location evidence="1">Cytoplasm</location>
    </subcellularLocation>
</comment>
<comment type="similarity">
    <text evidence="1">Belongs to the class-II aminoacyl-tRNA synthetase family.</text>
</comment>